<feature type="chain" id="PRO_0000067989" description="Trypanothione reductase">
    <location>
        <begin position="1"/>
        <end position="491"/>
    </location>
</feature>
<feature type="active site" description="Proton acceptor" evidence="1">
    <location>
        <position position="461"/>
    </location>
</feature>
<feature type="binding site" evidence="1">
    <location>
        <begin position="35"/>
        <end position="52"/>
    </location>
    <ligand>
        <name>FAD</name>
        <dbReference type="ChEBI" id="CHEBI:57692"/>
    </ligand>
</feature>
<feature type="disulfide bond" description="Redox-active" evidence="1">
    <location>
        <begin position="52"/>
        <end position="57"/>
    </location>
</feature>
<accession>P39050</accession>
<protein>
    <recommendedName>
        <fullName>Trypanothione reductase</fullName>
        <shortName>TR</shortName>
        <ecNumber>1.8.1.12</ecNumber>
    </recommendedName>
    <alternativeName>
        <fullName>N(1),N(8)-bis(glutathionyl)spermidine reductase</fullName>
    </alternativeName>
</protein>
<keyword id="KW-0963">Cytoplasm</keyword>
<keyword id="KW-1015">Disulfide bond</keyword>
<keyword id="KW-0274">FAD</keyword>
<keyword id="KW-0285">Flavoprotein</keyword>
<keyword id="KW-0521">NADP</keyword>
<keyword id="KW-0560">Oxidoreductase</keyword>
<keyword id="KW-0676">Redox-active center</keyword>
<organism>
    <name type="scientific">Leishmania donovani</name>
    <dbReference type="NCBI Taxonomy" id="5661"/>
    <lineage>
        <taxon>Eukaryota</taxon>
        <taxon>Discoba</taxon>
        <taxon>Euglenozoa</taxon>
        <taxon>Kinetoplastea</taxon>
        <taxon>Metakinetoplastina</taxon>
        <taxon>Trypanosomatida</taxon>
        <taxon>Trypanosomatidae</taxon>
        <taxon>Leishmaniinae</taxon>
        <taxon>Leishmania</taxon>
    </lineage>
</organism>
<evidence type="ECO:0000250" key="1"/>
<evidence type="ECO:0000305" key="2"/>
<proteinExistence type="inferred from homology"/>
<reference key="1">
    <citation type="journal article" date="1994" name="Mol. Biochem. Parasitol.">
        <title>The structure, organization, and expression of the Leishmania donovani gene encoding trypanothione reductase.</title>
        <authorList>
            <person name="Taylor M.C."/>
            <person name="Kelly J.M."/>
            <person name="Chapman C.J."/>
            <person name="Fairlamb A.H."/>
            <person name="Miles M.A."/>
        </authorList>
    </citation>
    <scope>NUCLEOTIDE SEQUENCE [GENOMIC DNA]</scope>
    <source>
        <strain>MHOM/ET/67/HU3</strain>
    </source>
</reference>
<name>TYTR_LEIDO</name>
<gene>
    <name type="primary">TPR</name>
</gene>
<sequence>MSRAYDLVVLGAGSGGLEAGWNAAVTHKKKVAVVDVQATHGPPALVALGGTCVNVGCVPKKLMVTGAQYMDLIRESGGFGWEMDRESLCPNWKTLIAAKNKVVNSINESYKSMFADTEGLSFHMGFGALQDAHTVVVRKSEDPHSDVLETLDTEYILIATGSWPTRLGVPGDEFCITSNEAFYLEDAPKRMLCVGGGYIAVEFAGIFNGYKPCGGYVDLCYRGDLILRGFDTEVRKSLTKQLGANGIRVRTNLNPTKITKNEDGSNHVHFNDGTEEDYDQVMLAIGVPRSQALQLDKAGVRTGKNGAVQVDAYSKTSVDNIYAIGDVTNRVMLTPVAINEGACVLLETVFGGKPRATDHTKVACAVFSIPPIGTCGMTEEEAAKNYETVAVYASSFTPLMHNISGSKHKEFMIRIITNESNGEVLGVHMLGDSAPEIIQSVGICMKMGAKISDFHSTIGVHPTSAEELCSMRTPAYFYESGKRVEKLSSNL</sequence>
<dbReference type="EC" id="1.8.1.12"/>
<dbReference type="EMBL" id="Z23135">
    <property type="protein sequence ID" value="CAA80668.1"/>
    <property type="molecule type" value="Genomic_DNA"/>
</dbReference>
<dbReference type="PIR" id="S34376">
    <property type="entry name" value="S34376"/>
</dbReference>
<dbReference type="SMR" id="P39050"/>
<dbReference type="ChEMBL" id="CHEMBL2176840"/>
<dbReference type="KEGG" id="ag:CAA80668"/>
<dbReference type="VEuPathDB" id="TriTrypDB:LdBPK_050350.1"/>
<dbReference type="VEuPathDB" id="TriTrypDB:LdCL_050008500"/>
<dbReference type="VEuPathDB" id="TriTrypDB:LDHU3_05.0400"/>
<dbReference type="GO" id="GO:0005829">
    <property type="term" value="C:cytosol"/>
    <property type="evidence" value="ECO:0007669"/>
    <property type="project" value="TreeGrafter"/>
</dbReference>
<dbReference type="GO" id="GO:0005739">
    <property type="term" value="C:mitochondrion"/>
    <property type="evidence" value="ECO:0007669"/>
    <property type="project" value="TreeGrafter"/>
</dbReference>
<dbReference type="GO" id="GO:0050660">
    <property type="term" value="F:flavin adenine dinucleotide binding"/>
    <property type="evidence" value="ECO:0007669"/>
    <property type="project" value="InterPro"/>
</dbReference>
<dbReference type="GO" id="GO:0004362">
    <property type="term" value="F:glutathione-disulfide reductase (NADPH) activity"/>
    <property type="evidence" value="ECO:0007669"/>
    <property type="project" value="TreeGrafter"/>
</dbReference>
<dbReference type="GO" id="GO:0015042">
    <property type="term" value="F:trypanothione-disulfide reductase (NADPH) activity"/>
    <property type="evidence" value="ECO:0007669"/>
    <property type="project" value="UniProtKB-EC"/>
</dbReference>
<dbReference type="GO" id="GO:0045454">
    <property type="term" value="P:cell redox homeostasis"/>
    <property type="evidence" value="ECO:0007669"/>
    <property type="project" value="InterPro"/>
</dbReference>
<dbReference type="GO" id="GO:0034599">
    <property type="term" value="P:cellular response to oxidative stress"/>
    <property type="evidence" value="ECO:0007669"/>
    <property type="project" value="TreeGrafter"/>
</dbReference>
<dbReference type="GO" id="GO:0006749">
    <property type="term" value="P:glutathione metabolic process"/>
    <property type="evidence" value="ECO:0007669"/>
    <property type="project" value="TreeGrafter"/>
</dbReference>
<dbReference type="FunFam" id="3.50.50.60:FF:000051">
    <property type="entry name" value="Glutathione reductase"/>
    <property type="match status" value="1"/>
</dbReference>
<dbReference type="FunFam" id="3.30.390.30:FF:000019">
    <property type="entry name" value="Trypanothione reductase"/>
    <property type="match status" value="1"/>
</dbReference>
<dbReference type="FunFam" id="3.50.50.60:FF:000233">
    <property type="entry name" value="Trypanothione reductase"/>
    <property type="match status" value="1"/>
</dbReference>
<dbReference type="Gene3D" id="3.30.390.30">
    <property type="match status" value="1"/>
</dbReference>
<dbReference type="Gene3D" id="3.50.50.60">
    <property type="entry name" value="FAD/NAD(P)-binding domain"/>
    <property type="match status" value="2"/>
</dbReference>
<dbReference type="InterPro" id="IPR036188">
    <property type="entry name" value="FAD/NAD-bd_sf"/>
</dbReference>
<dbReference type="InterPro" id="IPR023753">
    <property type="entry name" value="FAD/NAD-binding_dom"/>
</dbReference>
<dbReference type="InterPro" id="IPR016156">
    <property type="entry name" value="FAD/NAD-linked_Rdtase_dimer_sf"/>
</dbReference>
<dbReference type="InterPro" id="IPR046952">
    <property type="entry name" value="GSHR/TRXR-like"/>
</dbReference>
<dbReference type="InterPro" id="IPR001100">
    <property type="entry name" value="Pyr_nuc-diS_OxRdtase"/>
</dbReference>
<dbReference type="InterPro" id="IPR004099">
    <property type="entry name" value="Pyr_nucl-diS_OxRdtase_dimer"/>
</dbReference>
<dbReference type="InterPro" id="IPR012999">
    <property type="entry name" value="Pyr_OxRdtase_I_AS"/>
</dbReference>
<dbReference type="InterPro" id="IPR001864">
    <property type="entry name" value="Trypnth_redctse"/>
</dbReference>
<dbReference type="NCBIfam" id="TIGR01423">
    <property type="entry name" value="trypano_reduc"/>
    <property type="match status" value="1"/>
</dbReference>
<dbReference type="PANTHER" id="PTHR42737">
    <property type="entry name" value="GLUTATHIONE REDUCTASE"/>
    <property type="match status" value="1"/>
</dbReference>
<dbReference type="PANTHER" id="PTHR42737:SF2">
    <property type="entry name" value="GLUTATHIONE REDUCTASE"/>
    <property type="match status" value="1"/>
</dbReference>
<dbReference type="Pfam" id="PF07992">
    <property type="entry name" value="Pyr_redox_2"/>
    <property type="match status" value="1"/>
</dbReference>
<dbReference type="Pfam" id="PF02852">
    <property type="entry name" value="Pyr_redox_dim"/>
    <property type="match status" value="1"/>
</dbReference>
<dbReference type="PIRSF" id="PIRSF000350">
    <property type="entry name" value="Mercury_reductase_MerA"/>
    <property type="match status" value="1"/>
</dbReference>
<dbReference type="PRINTS" id="PR00368">
    <property type="entry name" value="FADPNR"/>
</dbReference>
<dbReference type="PRINTS" id="PR00411">
    <property type="entry name" value="PNDRDTASEI"/>
</dbReference>
<dbReference type="PRINTS" id="PR00470">
    <property type="entry name" value="TRYPANRDTASE"/>
</dbReference>
<dbReference type="SUPFAM" id="SSF51905">
    <property type="entry name" value="FAD/NAD(P)-binding domain"/>
    <property type="match status" value="1"/>
</dbReference>
<dbReference type="SUPFAM" id="SSF55424">
    <property type="entry name" value="FAD/NAD-linked reductases, dimerisation (C-terminal) domain"/>
    <property type="match status" value="1"/>
</dbReference>
<dbReference type="SUPFAM" id="SSF51971">
    <property type="entry name" value="Nucleotide-binding domain"/>
    <property type="match status" value="1"/>
</dbReference>
<dbReference type="PROSITE" id="PS00076">
    <property type="entry name" value="PYRIDINE_REDOX_1"/>
    <property type="match status" value="1"/>
</dbReference>
<comment type="function">
    <text>Trypanothione is the parasite analog of glutathione; this enzyme is the equivalent of glutathione reductase.</text>
</comment>
<comment type="catalytic activity">
    <reaction>
        <text>trypanothione + NADP(+) = trypanothione disulfide + NADPH + H(+)</text>
        <dbReference type="Rhea" id="RHEA:16757"/>
        <dbReference type="ChEBI" id="CHEBI:15378"/>
        <dbReference type="ChEBI" id="CHEBI:57783"/>
        <dbReference type="ChEBI" id="CHEBI:58290"/>
        <dbReference type="ChEBI" id="CHEBI:58349"/>
        <dbReference type="ChEBI" id="CHEBI:58661"/>
        <dbReference type="EC" id="1.8.1.12"/>
    </reaction>
</comment>
<comment type="cofactor">
    <cofactor evidence="1">
        <name>FAD</name>
        <dbReference type="ChEBI" id="CHEBI:57692"/>
    </cofactor>
    <text evidence="1">Binds 1 FAD per subunit.</text>
</comment>
<comment type="subunit">
    <text>Homodimer.</text>
</comment>
<comment type="subcellular location">
    <subcellularLocation>
        <location>Cytoplasm</location>
    </subcellularLocation>
</comment>
<comment type="miscellaneous">
    <text>The active site is a redox-active disulfide bond.</text>
</comment>
<comment type="similarity">
    <text evidence="2">Belongs to the class-I pyridine nucleotide-disulfide oxidoreductase family.</text>
</comment>